<name>YCJF_SALNS</name>
<dbReference type="EMBL" id="CP001113">
    <property type="protein sequence ID" value="ACF64194.1"/>
    <property type="molecule type" value="Genomic_DNA"/>
</dbReference>
<dbReference type="RefSeq" id="WP_001294468.1">
    <property type="nucleotide sequence ID" value="NZ_CCMR01000003.1"/>
</dbReference>
<dbReference type="SMR" id="B4T6S8"/>
<dbReference type="KEGG" id="see:SNSL254_A1808"/>
<dbReference type="HOGENOM" id="CLU_057693_2_0_6"/>
<dbReference type="Proteomes" id="UP000008824">
    <property type="component" value="Chromosome"/>
</dbReference>
<dbReference type="GO" id="GO:0005886">
    <property type="term" value="C:plasma membrane"/>
    <property type="evidence" value="ECO:0007669"/>
    <property type="project" value="UniProtKB-SubCell"/>
</dbReference>
<dbReference type="HAMAP" id="MF_01085">
    <property type="entry name" value="UPF0283"/>
    <property type="match status" value="1"/>
</dbReference>
<dbReference type="InterPro" id="IPR021147">
    <property type="entry name" value="DUF697"/>
</dbReference>
<dbReference type="InterPro" id="IPR006507">
    <property type="entry name" value="UPF0283"/>
</dbReference>
<dbReference type="NCBIfam" id="TIGR01620">
    <property type="entry name" value="hyp_HI0043"/>
    <property type="match status" value="1"/>
</dbReference>
<dbReference type="PANTHER" id="PTHR39342">
    <property type="entry name" value="UPF0283 MEMBRANE PROTEIN YCJF"/>
    <property type="match status" value="1"/>
</dbReference>
<dbReference type="PANTHER" id="PTHR39342:SF1">
    <property type="entry name" value="UPF0283 MEMBRANE PROTEIN YCJF"/>
    <property type="match status" value="1"/>
</dbReference>
<dbReference type="Pfam" id="PF05128">
    <property type="entry name" value="DUF697"/>
    <property type="match status" value="1"/>
</dbReference>
<gene>
    <name evidence="1" type="primary">ycjF</name>
    <name type="ordered locus">SNSL254_A1808</name>
</gene>
<organism>
    <name type="scientific">Salmonella newport (strain SL254)</name>
    <dbReference type="NCBI Taxonomy" id="423368"/>
    <lineage>
        <taxon>Bacteria</taxon>
        <taxon>Pseudomonadati</taxon>
        <taxon>Pseudomonadota</taxon>
        <taxon>Gammaproteobacteria</taxon>
        <taxon>Enterobacterales</taxon>
        <taxon>Enterobacteriaceae</taxon>
        <taxon>Salmonella</taxon>
    </lineage>
</organism>
<keyword id="KW-0997">Cell inner membrane</keyword>
<keyword id="KW-1003">Cell membrane</keyword>
<keyword id="KW-0472">Membrane</keyword>
<keyword id="KW-0812">Transmembrane</keyword>
<keyword id="KW-1133">Transmembrane helix</keyword>
<accession>B4T6S8</accession>
<proteinExistence type="inferred from homology"/>
<evidence type="ECO:0000255" key="1">
    <source>
        <dbReference type="HAMAP-Rule" id="MF_01085"/>
    </source>
</evidence>
<evidence type="ECO:0000256" key="2">
    <source>
        <dbReference type="SAM" id="MobiDB-lite"/>
    </source>
</evidence>
<reference key="1">
    <citation type="journal article" date="2011" name="J. Bacteriol.">
        <title>Comparative genomics of 28 Salmonella enterica isolates: evidence for CRISPR-mediated adaptive sublineage evolution.</title>
        <authorList>
            <person name="Fricke W.F."/>
            <person name="Mammel M.K."/>
            <person name="McDermott P.F."/>
            <person name="Tartera C."/>
            <person name="White D.G."/>
            <person name="Leclerc J.E."/>
            <person name="Ravel J."/>
            <person name="Cebula T.A."/>
        </authorList>
    </citation>
    <scope>NUCLEOTIDE SEQUENCE [LARGE SCALE GENOMIC DNA]</scope>
    <source>
        <strain>SL254</strain>
    </source>
</reference>
<feature type="chain" id="PRO_1000136898" description="UPF0283 membrane protein YcjF">
    <location>
        <begin position="1"/>
        <end position="353"/>
    </location>
</feature>
<feature type="transmembrane region" description="Helical" evidence="1">
    <location>
        <begin position="70"/>
        <end position="90"/>
    </location>
</feature>
<feature type="transmembrane region" description="Helical" evidence="1">
    <location>
        <begin position="100"/>
        <end position="120"/>
    </location>
</feature>
<feature type="transmembrane region" description="Helical" evidence="1">
    <location>
        <begin position="213"/>
        <end position="233"/>
    </location>
</feature>
<feature type="region of interest" description="Disordered" evidence="2">
    <location>
        <begin position="1"/>
        <end position="35"/>
    </location>
</feature>
<feature type="compositionally biased region" description="Basic and acidic residues" evidence="2">
    <location>
        <begin position="1"/>
        <end position="19"/>
    </location>
</feature>
<comment type="subcellular location">
    <subcellularLocation>
        <location evidence="1">Cell inner membrane</location>
        <topology evidence="1">Multi-pass membrane protein</topology>
    </subcellularLocation>
</comment>
<comment type="similarity">
    <text evidence="1">Belongs to the UPF0283 family.</text>
</comment>
<protein>
    <recommendedName>
        <fullName evidence="1">UPF0283 membrane protein YcjF</fullName>
    </recommendedName>
</protein>
<sequence length="353" mass="39296">MSEPLKPRIDFAEPLKEEPTSAFKAQQTFSEAESRTFAPAAIDERPEDEGVAEAAVDAALRPKRSLWRKMVMGGLALFGASVVGQGVQWTMNAWQTQDWVALGGCAAGALIIGAGVGSVVTEWRRLWRLRQRAHERDEARELLHSHSVGKGRAFCEKLAQQAGIDQSHPALQRWYAAIHETQNDREIVGLYANLVQPVLDAQARREISRFAAESTLMIVVSPLALVDMAFIAWRNLRLINRIATLYGIELGYYSRLRLFRLVLLNIAFAGASELVREVGMDWMSQDLAARLSTRAAQGIGAGLLTARLGIKAMELCRPLPWIDNDKPRLGDFRRQLIGQLKETLQKSKSSPEK</sequence>